<name>ASB11_DANRE</name>
<dbReference type="EMBL" id="AJ510191">
    <property type="protein sequence ID" value="CAD52871.1"/>
    <property type="molecule type" value="mRNA"/>
</dbReference>
<dbReference type="EMBL" id="BX571845">
    <property type="status" value="NOT_ANNOTATED_CDS"/>
    <property type="molecule type" value="Genomic_DNA"/>
</dbReference>
<dbReference type="RefSeq" id="NP_999957.1">
    <property type="nucleotide sequence ID" value="NM_214792.2"/>
</dbReference>
<dbReference type="SMR" id="Q70X92"/>
<dbReference type="STRING" id="7955.ENSDARP00000073523"/>
<dbReference type="PaxDb" id="7955-ENSDARP00000073523"/>
<dbReference type="GeneID" id="791758"/>
<dbReference type="KEGG" id="dre:791758"/>
<dbReference type="AGR" id="ZFIN:ZDB-GENE-070112-532"/>
<dbReference type="CTD" id="140456"/>
<dbReference type="ZFIN" id="ZDB-GENE-070112-532">
    <property type="gene designation" value="asb11"/>
</dbReference>
<dbReference type="eggNOG" id="KOG0504">
    <property type="taxonomic scope" value="Eukaryota"/>
</dbReference>
<dbReference type="HOGENOM" id="CLU_000134_4_1_1"/>
<dbReference type="OMA" id="TLMAGSW"/>
<dbReference type="OrthoDB" id="3246549at2759"/>
<dbReference type="TreeFam" id="TF331945"/>
<dbReference type="Reactome" id="R-DRE-8951664">
    <property type="pathway name" value="Neddylation"/>
</dbReference>
<dbReference type="Reactome" id="R-DRE-983168">
    <property type="pathway name" value="Antigen processing: Ubiquitination &amp; Proteasome degradation"/>
</dbReference>
<dbReference type="UniPathway" id="UPA00143"/>
<dbReference type="Proteomes" id="UP000000437">
    <property type="component" value="Chromosome 9"/>
</dbReference>
<dbReference type="Bgee" id="ENSDARG00000056561">
    <property type="expression patterns" value="Expressed in gastrula and 12 other cell types or tissues"/>
</dbReference>
<dbReference type="GO" id="GO:0031466">
    <property type="term" value="C:Cul5-RING ubiquitin ligase complex"/>
    <property type="evidence" value="ECO:0000314"/>
    <property type="project" value="UniProtKB"/>
</dbReference>
<dbReference type="GO" id="GO:0005783">
    <property type="term" value="C:endoplasmic reticulum"/>
    <property type="evidence" value="ECO:0000250"/>
    <property type="project" value="UniProtKB"/>
</dbReference>
<dbReference type="GO" id="GO:1990756">
    <property type="term" value="F:ubiquitin-like ligase-substrate adaptor activity"/>
    <property type="evidence" value="ECO:0000314"/>
    <property type="project" value="UniProtKB"/>
</dbReference>
<dbReference type="GO" id="GO:0030968">
    <property type="term" value="P:endoplasmic reticulum unfolded protein response"/>
    <property type="evidence" value="ECO:0000250"/>
    <property type="project" value="UniProtKB"/>
</dbReference>
<dbReference type="GO" id="GO:0045665">
    <property type="term" value="P:negative regulation of neuron differentiation"/>
    <property type="evidence" value="ECO:0000315"/>
    <property type="project" value="UniProtKB"/>
</dbReference>
<dbReference type="GO" id="GO:0045747">
    <property type="term" value="P:positive regulation of Notch signaling pathway"/>
    <property type="evidence" value="ECO:0000314"/>
    <property type="project" value="UniProtKB"/>
</dbReference>
<dbReference type="GO" id="GO:0045732">
    <property type="term" value="P:positive regulation of protein catabolic process"/>
    <property type="evidence" value="ECO:0000318"/>
    <property type="project" value="GO_Central"/>
</dbReference>
<dbReference type="GO" id="GO:0007221">
    <property type="term" value="P:positive regulation of transcription of Notch receptor target"/>
    <property type="evidence" value="ECO:0000315"/>
    <property type="project" value="ZFIN"/>
</dbReference>
<dbReference type="GO" id="GO:0043161">
    <property type="term" value="P:proteasome-mediated ubiquitin-dependent protein catabolic process"/>
    <property type="evidence" value="ECO:0000314"/>
    <property type="project" value="UniProtKB"/>
</dbReference>
<dbReference type="GO" id="GO:0070979">
    <property type="term" value="P:protein K11-linked ubiquitination"/>
    <property type="evidence" value="ECO:0000250"/>
    <property type="project" value="UniProtKB"/>
</dbReference>
<dbReference type="GO" id="GO:0016567">
    <property type="term" value="P:protein ubiquitination"/>
    <property type="evidence" value="ECO:0000250"/>
    <property type="project" value="UniProtKB"/>
</dbReference>
<dbReference type="GO" id="GO:0043416">
    <property type="term" value="P:regulation of skeletal muscle tissue regeneration"/>
    <property type="evidence" value="ECO:0000315"/>
    <property type="project" value="ZFIN"/>
</dbReference>
<dbReference type="CDD" id="cd03716">
    <property type="entry name" value="SOCS_ASB_like"/>
    <property type="match status" value="1"/>
</dbReference>
<dbReference type="FunFam" id="1.10.750.20:FF:000001">
    <property type="entry name" value="Ankyrin repeat and SOCS box containing 1"/>
    <property type="match status" value="1"/>
</dbReference>
<dbReference type="FunFam" id="1.25.40.20:FF:000016">
    <property type="entry name" value="Ankyrin repeat and SOCS box containing 5"/>
    <property type="match status" value="1"/>
</dbReference>
<dbReference type="Gene3D" id="1.25.40.20">
    <property type="entry name" value="Ankyrin repeat-containing domain"/>
    <property type="match status" value="1"/>
</dbReference>
<dbReference type="Gene3D" id="1.10.750.20">
    <property type="entry name" value="SOCS box"/>
    <property type="match status" value="1"/>
</dbReference>
<dbReference type="InterPro" id="IPR051573">
    <property type="entry name" value="Ankyrin-SOCS_box_domain"/>
</dbReference>
<dbReference type="InterPro" id="IPR002110">
    <property type="entry name" value="Ankyrin_rpt"/>
</dbReference>
<dbReference type="InterPro" id="IPR036770">
    <property type="entry name" value="Ankyrin_rpt-contain_sf"/>
</dbReference>
<dbReference type="InterPro" id="IPR001496">
    <property type="entry name" value="SOCS_box"/>
</dbReference>
<dbReference type="InterPro" id="IPR036036">
    <property type="entry name" value="SOCS_box-like_dom_sf"/>
</dbReference>
<dbReference type="PANTHER" id="PTHR24136:SF14">
    <property type="entry name" value="ANKYRIN REPEAT AND SOCS BOX PROTEIN 11"/>
    <property type="match status" value="1"/>
</dbReference>
<dbReference type="PANTHER" id="PTHR24136">
    <property type="entry name" value="SOWAH (DROSOPHILA) HOMOLOG"/>
    <property type="match status" value="1"/>
</dbReference>
<dbReference type="Pfam" id="PF00023">
    <property type="entry name" value="Ank"/>
    <property type="match status" value="1"/>
</dbReference>
<dbReference type="Pfam" id="PF12796">
    <property type="entry name" value="Ank_2"/>
    <property type="match status" value="2"/>
</dbReference>
<dbReference type="Pfam" id="PF07525">
    <property type="entry name" value="SOCS_box"/>
    <property type="match status" value="1"/>
</dbReference>
<dbReference type="SMART" id="SM00248">
    <property type="entry name" value="ANK"/>
    <property type="match status" value="6"/>
</dbReference>
<dbReference type="SMART" id="SM00969">
    <property type="entry name" value="SOCS_box"/>
    <property type="match status" value="1"/>
</dbReference>
<dbReference type="SUPFAM" id="SSF48403">
    <property type="entry name" value="Ankyrin repeat"/>
    <property type="match status" value="1"/>
</dbReference>
<dbReference type="SUPFAM" id="SSF158235">
    <property type="entry name" value="SOCS box-like"/>
    <property type="match status" value="1"/>
</dbReference>
<dbReference type="PROSITE" id="PS50297">
    <property type="entry name" value="ANK_REP_REGION"/>
    <property type="match status" value="4"/>
</dbReference>
<dbReference type="PROSITE" id="PS50088">
    <property type="entry name" value="ANK_REPEAT"/>
    <property type="match status" value="4"/>
</dbReference>
<dbReference type="PROSITE" id="PS50225">
    <property type="entry name" value="SOCS"/>
    <property type="match status" value="1"/>
</dbReference>
<proteinExistence type="evidence at protein level"/>
<evidence type="ECO:0000250" key="1">
    <source>
        <dbReference type="UniProtKB" id="Q8WXH4"/>
    </source>
</evidence>
<evidence type="ECO:0000255" key="2"/>
<evidence type="ECO:0000255" key="3">
    <source>
        <dbReference type="PROSITE-ProRule" id="PRU00194"/>
    </source>
</evidence>
<evidence type="ECO:0000269" key="4">
    <source>
    </source>
</evidence>
<evidence type="ECO:0000269" key="5">
    <source>
    </source>
</evidence>
<evidence type="ECO:0000269" key="6">
    <source>
    </source>
</evidence>
<evidence type="ECO:0000269" key="7">
    <source>
    </source>
</evidence>
<evidence type="ECO:0000303" key="8">
    <source>
    </source>
</evidence>
<evidence type="ECO:0000305" key="9"/>
<evidence type="ECO:0000305" key="10">
    <source>
    </source>
</evidence>
<evidence type="ECO:0000312" key="11">
    <source>
        <dbReference type="RefSeq" id="NP_999957.1"/>
    </source>
</evidence>
<evidence type="ECO:0000312" key="12">
    <source>
        <dbReference type="ZFIN" id="ZDB-GENE-070112-532"/>
    </source>
</evidence>
<gene>
    <name evidence="8 12" type="primary">asb11</name>
    <name evidence="11" type="ORF">zgc:136370</name>
    <name evidence="11" type="ORF">zgc:158532</name>
</gene>
<protein>
    <recommendedName>
        <fullName evidence="9">Ankyrin repeat and SOCS box protein 11</fullName>
        <shortName evidence="9">ASB-11</shortName>
        <shortName evidence="8">d-asb11</shortName>
    </recommendedName>
</protein>
<comment type="function">
    <text evidence="4 5 6 7">Substrate-recognition component of a cullin-5-RING E3 ubiquitin-protein ligase complex (ECS complex, also named CRL5 complex), which mediates the ubiquitination and subsequent proteasomal degradation of target proteins (PubMed:18776899). Acts as a regulator of the neuronal progenitor compartment size by maintaining the neural precursors in the proliferating undifferentiated state (PubMed:16893969). The ECS(ASB11) complex acts as a positive regulator of Notch signaling pathway by mediating ubiquitination and degradation of DeltaA (dla) (PubMed:18776899, PubMed:21124961). Also acts as a regulator of regenerative myogenesis (PubMed:22512762).</text>
</comment>
<comment type="pathway">
    <text evidence="5">Protein modification; protein ubiquitination.</text>
</comment>
<comment type="subunit">
    <text evidence="10">substrate-recognition component of the ECS(ASB11) complex, composed of asb11, cul5, elob, eloc and rnf7/rbx2 (PubMed:16893969).</text>
</comment>
<comment type="subcellular location">
    <subcellularLocation>
        <location evidence="1">Endoplasmic reticulum</location>
    </subcellularLocation>
</comment>
<comment type="tissue specificity">
    <text evidence="4">Expressed in the developing nervous system: localizes to neural plate margins and is abutting the proneuronal zone.</text>
</comment>
<comment type="developmental stage">
    <text evidence="4">Ubiquitously expressed in the pluripotent cells of the blastoderm before early somitogenesis. It then becomes progressivelys restricted to the lateral regions of the neural plate.</text>
</comment>
<comment type="disruption phenotype">
    <text evidence="5">Morpholino knockdown of the protein causes a reduction in specific Delta-Notch signaling.</text>
</comment>
<comment type="similarity">
    <text evidence="9">Belongs to the ankyrin SOCS box (ASB) family.</text>
</comment>
<keyword id="KW-0040">ANK repeat</keyword>
<keyword id="KW-0256">Endoplasmic reticulum</keyword>
<keyword id="KW-1185">Reference proteome</keyword>
<keyword id="KW-0677">Repeat</keyword>
<keyword id="KW-0833">Ubl conjugation pathway</keyword>
<sequence length="293" mass="31531">MAVVHAEGNVWIKQWDHRFHMYGGQTCSPLMAGSWDDRTPLHDAALQGRLLPLRRLLSQGYNVGMATLDGITALHEACVGGHFTCAKLLLEHGADANAVTFDGATPLFSACCSGNPALVSLILTHSSAHHPAHLLCSPLHEAAKRGHTACVELLLSHGVNVDMELPSVGTALYCACEVKSTDCVLTLLILGADVQCGRGLDTPLHAACRVGGAKEAELLLEHGADRTSRNSEGKTPLDLTSDQSIKHLLQTAGTCSLSQLCRWCIRRSLGQKGLNKTKTLCLPHMLHNYLLYH</sequence>
<reference key="1">
    <citation type="journal article" date="2006" name="J. Cell Biol.">
        <title>The novel gene asb11: a regulator of the size of the neural progenitor compartment.</title>
        <authorList>
            <person name="Diks S.H."/>
            <person name="Bink R.J."/>
            <person name="van de Water S."/>
            <person name="Joore J."/>
            <person name="van Rooijen C."/>
            <person name="Verbeek F.J."/>
            <person name="den Hertog J."/>
            <person name="Peppelenbosch M.P."/>
            <person name="Zivkovic D."/>
        </authorList>
    </citation>
    <scope>NUCLEOTIDE SEQUENCE [MRNA]</scope>
    <scope>FUNCTION</scope>
    <scope>IDENTIFICATION IN THE ECS(ASB11) COMPLEX</scope>
    <scope>TISSUE SPECIFICITY</scope>
    <scope>DEVELOPMENTAL STAGE</scope>
</reference>
<reference key="2">
    <citation type="journal article" date="2013" name="Nature">
        <title>The zebrafish reference genome sequence and its relationship to the human genome.</title>
        <authorList>
            <person name="Howe K."/>
            <person name="Clark M.D."/>
            <person name="Torroja C.F."/>
            <person name="Torrance J."/>
            <person name="Berthelot C."/>
            <person name="Muffato M."/>
            <person name="Collins J.E."/>
            <person name="Humphray S."/>
            <person name="McLaren K."/>
            <person name="Matthews L."/>
            <person name="McLaren S."/>
            <person name="Sealy I."/>
            <person name="Caccamo M."/>
            <person name="Churcher C."/>
            <person name="Scott C."/>
            <person name="Barrett J.C."/>
            <person name="Koch R."/>
            <person name="Rauch G.J."/>
            <person name="White S."/>
            <person name="Chow W."/>
            <person name="Kilian B."/>
            <person name="Quintais L.T."/>
            <person name="Guerra-Assuncao J.A."/>
            <person name="Zhou Y."/>
            <person name="Gu Y."/>
            <person name="Yen J."/>
            <person name="Vogel J.H."/>
            <person name="Eyre T."/>
            <person name="Redmond S."/>
            <person name="Banerjee R."/>
            <person name="Chi J."/>
            <person name="Fu B."/>
            <person name="Langley E."/>
            <person name="Maguire S.F."/>
            <person name="Laird G.K."/>
            <person name="Lloyd D."/>
            <person name="Kenyon E."/>
            <person name="Donaldson S."/>
            <person name="Sehra H."/>
            <person name="Almeida-King J."/>
            <person name="Loveland J."/>
            <person name="Trevanion S."/>
            <person name="Jones M."/>
            <person name="Quail M."/>
            <person name="Willey D."/>
            <person name="Hunt A."/>
            <person name="Burton J."/>
            <person name="Sims S."/>
            <person name="McLay K."/>
            <person name="Plumb B."/>
            <person name="Davis J."/>
            <person name="Clee C."/>
            <person name="Oliver K."/>
            <person name="Clark R."/>
            <person name="Riddle C."/>
            <person name="Elliot D."/>
            <person name="Threadgold G."/>
            <person name="Harden G."/>
            <person name="Ware D."/>
            <person name="Begum S."/>
            <person name="Mortimore B."/>
            <person name="Kerry G."/>
            <person name="Heath P."/>
            <person name="Phillimore B."/>
            <person name="Tracey A."/>
            <person name="Corby N."/>
            <person name="Dunn M."/>
            <person name="Johnson C."/>
            <person name="Wood J."/>
            <person name="Clark S."/>
            <person name="Pelan S."/>
            <person name="Griffiths G."/>
            <person name="Smith M."/>
            <person name="Glithero R."/>
            <person name="Howden P."/>
            <person name="Barker N."/>
            <person name="Lloyd C."/>
            <person name="Stevens C."/>
            <person name="Harley J."/>
            <person name="Holt K."/>
            <person name="Panagiotidis G."/>
            <person name="Lovell J."/>
            <person name="Beasley H."/>
            <person name="Henderson C."/>
            <person name="Gordon D."/>
            <person name="Auger K."/>
            <person name="Wright D."/>
            <person name="Collins J."/>
            <person name="Raisen C."/>
            <person name="Dyer L."/>
            <person name="Leung K."/>
            <person name="Robertson L."/>
            <person name="Ambridge K."/>
            <person name="Leongamornlert D."/>
            <person name="McGuire S."/>
            <person name="Gilderthorp R."/>
            <person name="Griffiths C."/>
            <person name="Manthravadi D."/>
            <person name="Nichol S."/>
            <person name="Barker G."/>
            <person name="Whitehead S."/>
            <person name="Kay M."/>
            <person name="Brown J."/>
            <person name="Murnane C."/>
            <person name="Gray E."/>
            <person name="Humphries M."/>
            <person name="Sycamore N."/>
            <person name="Barker D."/>
            <person name="Saunders D."/>
            <person name="Wallis J."/>
            <person name="Babbage A."/>
            <person name="Hammond S."/>
            <person name="Mashreghi-Mohammadi M."/>
            <person name="Barr L."/>
            <person name="Martin S."/>
            <person name="Wray P."/>
            <person name="Ellington A."/>
            <person name="Matthews N."/>
            <person name="Ellwood M."/>
            <person name="Woodmansey R."/>
            <person name="Clark G."/>
            <person name="Cooper J."/>
            <person name="Tromans A."/>
            <person name="Grafham D."/>
            <person name="Skuce C."/>
            <person name="Pandian R."/>
            <person name="Andrews R."/>
            <person name="Harrison E."/>
            <person name="Kimberley A."/>
            <person name="Garnett J."/>
            <person name="Fosker N."/>
            <person name="Hall R."/>
            <person name="Garner P."/>
            <person name="Kelly D."/>
            <person name="Bird C."/>
            <person name="Palmer S."/>
            <person name="Gehring I."/>
            <person name="Berger A."/>
            <person name="Dooley C.M."/>
            <person name="Ersan-Urun Z."/>
            <person name="Eser C."/>
            <person name="Geiger H."/>
            <person name="Geisler M."/>
            <person name="Karotki L."/>
            <person name="Kirn A."/>
            <person name="Konantz J."/>
            <person name="Konantz M."/>
            <person name="Oberlander M."/>
            <person name="Rudolph-Geiger S."/>
            <person name="Teucke M."/>
            <person name="Lanz C."/>
            <person name="Raddatz G."/>
            <person name="Osoegawa K."/>
            <person name="Zhu B."/>
            <person name="Rapp A."/>
            <person name="Widaa S."/>
            <person name="Langford C."/>
            <person name="Yang F."/>
            <person name="Schuster S.C."/>
            <person name="Carter N.P."/>
            <person name="Harrow J."/>
            <person name="Ning Z."/>
            <person name="Herrero J."/>
            <person name="Searle S.M."/>
            <person name="Enright A."/>
            <person name="Geisler R."/>
            <person name="Plasterk R.H."/>
            <person name="Lee C."/>
            <person name="Westerfield M."/>
            <person name="de Jong P.J."/>
            <person name="Zon L.I."/>
            <person name="Postlethwait J.H."/>
            <person name="Nusslein-Volhard C."/>
            <person name="Hubbard T.J."/>
            <person name="Roest Crollius H."/>
            <person name="Rogers J."/>
            <person name="Stemple D.L."/>
        </authorList>
    </citation>
    <scope>NUCLEOTIDE SEQUENCE [LARGE SCALE GENOMIC DNA]</scope>
    <source>
        <strain>Tuebingen</strain>
    </source>
</reference>
<reference key="3">
    <citation type="journal article" date="2008" name="Nat. Cell Biol.">
        <title>d-Asb11 is an essential mediator of canonical Delta-Notch signalling.</title>
        <authorList>
            <person name="Diks S.H."/>
            <person name="Sartori da Silva M.A."/>
            <person name="Hillebrands J.L."/>
            <person name="Bink R.J."/>
            <person name="Versteeg H.H."/>
            <person name="van Rooijen C."/>
            <person name="Brouwers A."/>
            <person name="Chitnis A.B."/>
            <person name="Peppelenbosch M.P."/>
            <person name="Zivkovic D."/>
        </authorList>
    </citation>
    <scope>FUNCTION</scope>
    <scope>PATHWAY</scope>
    <scope>DISRUPTION PHENOTYPE</scope>
</reference>
<reference key="4">
    <citation type="journal article" date="2010" name="PLoS ONE">
        <title>Essential role for the d-Asb11 cul5 Box domain for proper notch signaling and neural cell fate decisions in vivo.</title>
        <authorList>
            <person name="Sartori da Silva M.A."/>
            <person name="Tee J.M."/>
            <person name="Paridaen J."/>
            <person name="Brouwers A."/>
            <person name="Runtuwene V."/>
            <person name="Zivkovic D."/>
            <person name="Diks S.H."/>
            <person name="Guardavaccaro D."/>
            <person name="Peppelenbosch M.P."/>
        </authorList>
    </citation>
    <scope>FUNCTION</scope>
</reference>
<reference key="5">
    <citation type="journal article" date="2012" name="Stem Cells Dev.">
        <title>asb11 is a regulator of embryonic and adult regenerative myogenesis.</title>
        <authorList>
            <person name="Tee J.M."/>
            <person name="Sartori da Silva M.A."/>
            <person name="Rygiel A.M."/>
            <person name="Muncan V."/>
            <person name="Bink R."/>
            <person name="van den Brink G.R."/>
            <person name="van Tijn P."/>
            <person name="Zivkovic D."/>
            <person name="Kodach L.L."/>
            <person name="Guardavaccaro D."/>
            <person name="Diks S.H."/>
            <person name="Peppelenbosch M.P."/>
        </authorList>
    </citation>
    <scope>FUNCTION</scope>
</reference>
<organism>
    <name type="scientific">Danio rerio</name>
    <name type="common">Zebrafish</name>
    <name type="synonym">Brachydanio rerio</name>
    <dbReference type="NCBI Taxonomy" id="7955"/>
    <lineage>
        <taxon>Eukaryota</taxon>
        <taxon>Metazoa</taxon>
        <taxon>Chordata</taxon>
        <taxon>Craniata</taxon>
        <taxon>Vertebrata</taxon>
        <taxon>Euteleostomi</taxon>
        <taxon>Actinopterygii</taxon>
        <taxon>Neopterygii</taxon>
        <taxon>Teleostei</taxon>
        <taxon>Ostariophysi</taxon>
        <taxon>Cypriniformes</taxon>
        <taxon>Danionidae</taxon>
        <taxon>Danioninae</taxon>
        <taxon>Danio</taxon>
    </lineage>
</organism>
<accession>Q70X92</accession>
<accession>A0A8M1PR96</accession>
<feature type="chain" id="PRO_0000460710" description="Ankyrin repeat and SOCS box protein 11">
    <location>
        <begin position="1"/>
        <end position="293"/>
    </location>
</feature>
<feature type="repeat" description="ANK 1" evidence="2">
    <location>
        <begin position="36"/>
        <end position="65"/>
    </location>
</feature>
<feature type="repeat" description="ANK 2" evidence="2">
    <location>
        <begin position="69"/>
        <end position="98"/>
    </location>
</feature>
<feature type="repeat" description="ANK 3" evidence="2">
    <location>
        <begin position="102"/>
        <end position="131"/>
    </location>
</feature>
<feature type="repeat" description="ANK 4" evidence="2">
    <location>
        <begin position="134"/>
        <end position="163"/>
    </location>
</feature>
<feature type="repeat" description="ANK 5" evidence="2">
    <location>
        <begin position="167"/>
        <end position="196"/>
    </location>
</feature>
<feature type="repeat" description="ANK 6" evidence="2">
    <location>
        <begin position="199"/>
        <end position="228"/>
    </location>
</feature>
<feature type="repeat" description="ANK 7" evidence="2">
    <location>
        <begin position="232"/>
        <end position="259"/>
    </location>
</feature>
<feature type="domain" description="SOCS box" evidence="3">
    <location>
        <begin position="244"/>
        <end position="293"/>
    </location>
</feature>